<keyword id="KW-0046">Antibiotic resistance</keyword>
<keyword id="KW-1003">Cell membrane</keyword>
<keyword id="KW-0472">Membrane</keyword>
<keyword id="KW-0812">Transmembrane</keyword>
<keyword id="KW-1133">Transmembrane helix</keyword>
<keyword id="KW-0813">Transport</keyword>
<sequence length="471" mass="50368">MQQEATGGQKIRPIPIIASFLMAGFIGLFSETALNMALSDLIQVFDISSATVQWLTTGYLLTLGILVPISGLLLQWFTTRGLFFTAVSFSIAGTLIAALSPTFAMLMIGRVVQAVGTALLLPLMFNTILLIFPEHKRGSAMGMIGLVIMFAPAVGPTISGLILENLTWNWIFWISLPFLIIALLFGMKFMQNVSVVTKPKIDILSIILSTLGFGGVVFAFSSAGENGWGSATVLVSIIVGGIALGLFVWRQLTMEKPLMDLKVFKYPMFTLGLILVFISFMMILSTMILLPLYLQNSLALAAFSAGLVLLPGGVLNGLMSPFTGRLFDAYGPRALVIPGFIVAVIALFFLTRIEVGTSALTIIVLHSVLMIGISMVMMPAQTNGLNQLPPKLYPDGTAIMNTLQQVSGAIGTAVAITIMSAGQKAYMETAQGVGPEQMIASLTAGIQNAFVFGLIMACIGLLCSLFIRKAK</sequence>
<accession>Q92EE1</accession>
<reference key="1">
    <citation type="journal article" date="2001" name="Science">
        <title>Comparative genomics of Listeria species.</title>
        <authorList>
            <person name="Glaser P."/>
            <person name="Frangeul L."/>
            <person name="Buchrieser C."/>
            <person name="Rusniok C."/>
            <person name="Amend A."/>
            <person name="Baquero F."/>
            <person name="Berche P."/>
            <person name="Bloecker H."/>
            <person name="Brandt P."/>
            <person name="Chakraborty T."/>
            <person name="Charbit A."/>
            <person name="Chetouani F."/>
            <person name="Couve E."/>
            <person name="de Daruvar A."/>
            <person name="Dehoux P."/>
            <person name="Domann E."/>
            <person name="Dominguez-Bernal G."/>
            <person name="Duchaud E."/>
            <person name="Durant L."/>
            <person name="Dussurget O."/>
            <person name="Entian K.-D."/>
            <person name="Fsihi H."/>
            <person name="Garcia-del Portillo F."/>
            <person name="Garrido P."/>
            <person name="Gautier L."/>
            <person name="Goebel W."/>
            <person name="Gomez-Lopez N."/>
            <person name="Hain T."/>
            <person name="Hauf J."/>
            <person name="Jackson D."/>
            <person name="Jones L.-M."/>
            <person name="Kaerst U."/>
            <person name="Kreft J."/>
            <person name="Kuhn M."/>
            <person name="Kunst F."/>
            <person name="Kurapkat G."/>
            <person name="Madueno E."/>
            <person name="Maitournam A."/>
            <person name="Mata Vicente J."/>
            <person name="Ng E."/>
            <person name="Nedjari H."/>
            <person name="Nordsiek G."/>
            <person name="Novella S."/>
            <person name="de Pablos B."/>
            <person name="Perez-Diaz J.-C."/>
            <person name="Purcell R."/>
            <person name="Remmel B."/>
            <person name="Rose M."/>
            <person name="Schlueter T."/>
            <person name="Simoes N."/>
            <person name="Tierrez A."/>
            <person name="Vazquez-Boland J.-A."/>
            <person name="Voss H."/>
            <person name="Wehland J."/>
            <person name="Cossart P."/>
        </authorList>
    </citation>
    <scope>NUCLEOTIDE SEQUENCE [LARGE SCALE GENOMIC DNA]</scope>
    <source>
        <strain>ATCC BAA-680 / CLIP 11262</strain>
    </source>
</reference>
<protein>
    <recommendedName>
        <fullName>Lincomycin resistance protein LmrB</fullName>
    </recommendedName>
</protein>
<evidence type="ECO:0000250" key="1"/>
<evidence type="ECO:0000255" key="2"/>
<evidence type="ECO:0000305" key="3"/>
<gene>
    <name type="primary">lmrB</name>
    <name type="ordered locus">lin0519</name>
</gene>
<dbReference type="EMBL" id="AL596165">
    <property type="protein sequence ID" value="CAC95751.1"/>
    <property type="molecule type" value="Genomic_DNA"/>
</dbReference>
<dbReference type="PIR" id="AG1497">
    <property type="entry name" value="AG1497"/>
</dbReference>
<dbReference type="RefSeq" id="WP_010990459.1">
    <property type="nucleotide sequence ID" value="NC_003212.1"/>
</dbReference>
<dbReference type="SMR" id="Q92EE1"/>
<dbReference type="STRING" id="272626.gene:17564845"/>
<dbReference type="KEGG" id="lin:lin0519"/>
<dbReference type="eggNOG" id="COG0477">
    <property type="taxonomic scope" value="Bacteria"/>
</dbReference>
<dbReference type="HOGENOM" id="CLU_000960_28_0_9"/>
<dbReference type="OrthoDB" id="9816041at2"/>
<dbReference type="Proteomes" id="UP000002513">
    <property type="component" value="Chromosome"/>
</dbReference>
<dbReference type="GO" id="GO:0005886">
    <property type="term" value="C:plasma membrane"/>
    <property type="evidence" value="ECO:0007669"/>
    <property type="project" value="UniProtKB-SubCell"/>
</dbReference>
<dbReference type="GO" id="GO:0022857">
    <property type="term" value="F:transmembrane transporter activity"/>
    <property type="evidence" value="ECO:0007669"/>
    <property type="project" value="InterPro"/>
</dbReference>
<dbReference type="GO" id="GO:0046677">
    <property type="term" value="P:response to antibiotic"/>
    <property type="evidence" value="ECO:0007669"/>
    <property type="project" value="UniProtKB-KW"/>
</dbReference>
<dbReference type="CDD" id="cd17503">
    <property type="entry name" value="MFS_LmrB_MDR_like"/>
    <property type="match status" value="1"/>
</dbReference>
<dbReference type="Gene3D" id="1.20.1250.20">
    <property type="entry name" value="MFS general substrate transporter like domains"/>
    <property type="match status" value="1"/>
</dbReference>
<dbReference type="Gene3D" id="1.20.1720.10">
    <property type="entry name" value="Multidrug resistance protein D"/>
    <property type="match status" value="1"/>
</dbReference>
<dbReference type="InterPro" id="IPR004638">
    <property type="entry name" value="EmrB-like"/>
</dbReference>
<dbReference type="InterPro" id="IPR011701">
    <property type="entry name" value="MFS"/>
</dbReference>
<dbReference type="InterPro" id="IPR020846">
    <property type="entry name" value="MFS_dom"/>
</dbReference>
<dbReference type="InterPro" id="IPR036259">
    <property type="entry name" value="MFS_trans_sf"/>
</dbReference>
<dbReference type="NCBIfam" id="TIGR00711">
    <property type="entry name" value="efflux_EmrB"/>
    <property type="match status" value="1"/>
</dbReference>
<dbReference type="PANTHER" id="PTHR42718:SF43">
    <property type="entry name" value="LINCOMYCIN RESISTANCE PROTEIN LMRB"/>
    <property type="match status" value="1"/>
</dbReference>
<dbReference type="PANTHER" id="PTHR42718">
    <property type="entry name" value="MAJOR FACILITATOR SUPERFAMILY MULTIDRUG TRANSPORTER MFSC"/>
    <property type="match status" value="1"/>
</dbReference>
<dbReference type="Pfam" id="PF07690">
    <property type="entry name" value="MFS_1"/>
    <property type="match status" value="1"/>
</dbReference>
<dbReference type="PRINTS" id="PR01036">
    <property type="entry name" value="TCRTETB"/>
</dbReference>
<dbReference type="SUPFAM" id="SSF103473">
    <property type="entry name" value="MFS general substrate transporter"/>
    <property type="match status" value="1"/>
</dbReference>
<dbReference type="PROSITE" id="PS50850">
    <property type="entry name" value="MFS"/>
    <property type="match status" value="1"/>
</dbReference>
<proteinExistence type="inferred from homology"/>
<organism>
    <name type="scientific">Listeria innocua serovar 6a (strain ATCC BAA-680 / CLIP 11262)</name>
    <dbReference type="NCBI Taxonomy" id="272626"/>
    <lineage>
        <taxon>Bacteria</taxon>
        <taxon>Bacillati</taxon>
        <taxon>Bacillota</taxon>
        <taxon>Bacilli</taxon>
        <taxon>Bacillales</taxon>
        <taxon>Listeriaceae</taxon>
        <taxon>Listeria</taxon>
    </lineage>
</organism>
<comment type="function">
    <text evidence="1">Proton-dependent transporter. May mediate the efflux of lincomycin (By similarity).</text>
</comment>
<comment type="subcellular location">
    <subcellularLocation>
        <location evidence="3">Cell membrane</location>
        <topology evidence="3">Multi-pass membrane protein</topology>
    </subcellularLocation>
</comment>
<comment type="similarity">
    <text evidence="3">Belongs to the major facilitator superfamily. EmrB family.</text>
</comment>
<name>LMRB_LISIN</name>
<feature type="chain" id="PRO_0000173329" description="Lincomycin resistance protein LmrB">
    <location>
        <begin position="1"/>
        <end position="471"/>
    </location>
</feature>
<feature type="transmembrane region" description="Helical" evidence="2">
    <location>
        <begin position="15"/>
        <end position="34"/>
    </location>
</feature>
<feature type="transmembrane region" description="Helical" evidence="2">
    <location>
        <begin position="55"/>
        <end position="77"/>
    </location>
</feature>
<feature type="transmembrane region" description="Helical" evidence="2">
    <location>
        <begin position="82"/>
        <end position="104"/>
    </location>
</feature>
<feature type="transmembrane region" description="Helical" evidence="2">
    <location>
        <begin position="111"/>
        <end position="131"/>
    </location>
</feature>
<feature type="transmembrane region" description="Helical" evidence="2">
    <location>
        <begin position="141"/>
        <end position="163"/>
    </location>
</feature>
<feature type="transmembrane region" description="Helical" evidence="2">
    <location>
        <begin position="170"/>
        <end position="187"/>
    </location>
</feature>
<feature type="transmembrane region" description="Helical" evidence="2">
    <location>
        <begin position="202"/>
        <end position="224"/>
    </location>
</feature>
<feature type="transmembrane region" description="Helical" evidence="2">
    <location>
        <begin position="231"/>
        <end position="253"/>
    </location>
</feature>
<feature type="transmembrane region" description="Helical" evidence="2">
    <location>
        <begin position="268"/>
        <end position="290"/>
    </location>
</feature>
<feature type="transmembrane region" description="Helical" evidence="2">
    <location>
        <begin position="297"/>
        <end position="319"/>
    </location>
</feature>
<feature type="transmembrane region" description="Helical" evidence="2">
    <location>
        <begin position="329"/>
        <end position="351"/>
    </location>
</feature>
<feature type="transmembrane region" description="Helical" evidence="2">
    <location>
        <begin position="358"/>
        <end position="380"/>
    </location>
</feature>
<feature type="transmembrane region" description="Helical" evidence="2">
    <location>
        <begin position="445"/>
        <end position="467"/>
    </location>
</feature>